<reference key="1">
    <citation type="submission" date="2007-08" db="EMBL/GenBank/DDBJ databases">
        <title>Complete sequence of Roseiflexus castenholzii DSM 13941.</title>
        <authorList>
            <consortium name="US DOE Joint Genome Institute"/>
            <person name="Copeland A."/>
            <person name="Lucas S."/>
            <person name="Lapidus A."/>
            <person name="Barry K."/>
            <person name="Glavina del Rio T."/>
            <person name="Dalin E."/>
            <person name="Tice H."/>
            <person name="Pitluck S."/>
            <person name="Thompson L.S."/>
            <person name="Brettin T."/>
            <person name="Bruce D."/>
            <person name="Detter J.C."/>
            <person name="Han C."/>
            <person name="Tapia R."/>
            <person name="Schmutz J."/>
            <person name="Larimer F."/>
            <person name="Land M."/>
            <person name="Hauser L."/>
            <person name="Kyrpides N."/>
            <person name="Mikhailova N."/>
            <person name="Bryant D.A."/>
            <person name="Hanada S."/>
            <person name="Tsukatani Y."/>
            <person name="Richardson P."/>
        </authorList>
    </citation>
    <scope>NUCLEOTIDE SEQUENCE [LARGE SCALE GENOMIC DNA]</scope>
    <source>
        <strain>DSM 13941 / HLO8</strain>
    </source>
</reference>
<gene>
    <name evidence="1" type="primary">metK</name>
    <name type="ordered locus">Rcas_0160</name>
</gene>
<organism>
    <name type="scientific">Roseiflexus castenholzii (strain DSM 13941 / HLO8)</name>
    <dbReference type="NCBI Taxonomy" id="383372"/>
    <lineage>
        <taxon>Bacteria</taxon>
        <taxon>Bacillati</taxon>
        <taxon>Chloroflexota</taxon>
        <taxon>Chloroflexia</taxon>
        <taxon>Chloroflexales</taxon>
        <taxon>Roseiflexineae</taxon>
        <taxon>Roseiflexaceae</taxon>
        <taxon>Roseiflexus</taxon>
    </lineage>
</organism>
<proteinExistence type="inferred from homology"/>
<protein>
    <recommendedName>
        <fullName evidence="1">S-adenosylmethionine synthase</fullName>
        <shortName evidence="1">AdoMet synthase</shortName>
        <ecNumber evidence="1">2.5.1.6</ecNumber>
    </recommendedName>
    <alternativeName>
        <fullName evidence="1">MAT</fullName>
    </alternativeName>
    <alternativeName>
        <fullName evidence="1">Methionine adenosyltransferase</fullName>
    </alternativeName>
</protein>
<keyword id="KW-0067">ATP-binding</keyword>
<keyword id="KW-0963">Cytoplasm</keyword>
<keyword id="KW-0460">Magnesium</keyword>
<keyword id="KW-0479">Metal-binding</keyword>
<keyword id="KW-0547">Nucleotide-binding</keyword>
<keyword id="KW-0554">One-carbon metabolism</keyword>
<keyword id="KW-0630">Potassium</keyword>
<keyword id="KW-1185">Reference proteome</keyword>
<keyword id="KW-0808">Transferase</keyword>
<evidence type="ECO:0000255" key="1">
    <source>
        <dbReference type="HAMAP-Rule" id="MF_00086"/>
    </source>
</evidence>
<comment type="function">
    <text evidence="1">Catalyzes the formation of S-adenosylmethionine (AdoMet) from methionine and ATP. The overall synthetic reaction is composed of two sequential steps, AdoMet formation and the subsequent tripolyphosphate hydrolysis which occurs prior to release of AdoMet from the enzyme.</text>
</comment>
<comment type="catalytic activity">
    <reaction evidence="1">
        <text>L-methionine + ATP + H2O = S-adenosyl-L-methionine + phosphate + diphosphate</text>
        <dbReference type="Rhea" id="RHEA:21080"/>
        <dbReference type="ChEBI" id="CHEBI:15377"/>
        <dbReference type="ChEBI" id="CHEBI:30616"/>
        <dbReference type="ChEBI" id="CHEBI:33019"/>
        <dbReference type="ChEBI" id="CHEBI:43474"/>
        <dbReference type="ChEBI" id="CHEBI:57844"/>
        <dbReference type="ChEBI" id="CHEBI:59789"/>
        <dbReference type="EC" id="2.5.1.6"/>
    </reaction>
</comment>
<comment type="cofactor">
    <cofactor evidence="1">
        <name>Mg(2+)</name>
        <dbReference type="ChEBI" id="CHEBI:18420"/>
    </cofactor>
    <text evidence="1">Binds 2 divalent ions per subunit.</text>
</comment>
<comment type="cofactor">
    <cofactor evidence="1">
        <name>K(+)</name>
        <dbReference type="ChEBI" id="CHEBI:29103"/>
    </cofactor>
    <text evidence="1">Binds 1 potassium ion per subunit.</text>
</comment>
<comment type="pathway">
    <text evidence="1">Amino-acid biosynthesis; S-adenosyl-L-methionine biosynthesis; S-adenosyl-L-methionine from L-methionine: step 1/1.</text>
</comment>
<comment type="subunit">
    <text evidence="1">Homotetramer; dimer of dimers.</text>
</comment>
<comment type="subcellular location">
    <subcellularLocation>
        <location evidence="1">Cytoplasm</location>
    </subcellularLocation>
</comment>
<comment type="similarity">
    <text evidence="1">Belongs to the AdoMet synthase family.</text>
</comment>
<accession>A7NFR6</accession>
<dbReference type="EC" id="2.5.1.6" evidence="1"/>
<dbReference type="EMBL" id="CP000804">
    <property type="protein sequence ID" value="ABU56295.1"/>
    <property type="molecule type" value="Genomic_DNA"/>
</dbReference>
<dbReference type="RefSeq" id="WP_011997700.1">
    <property type="nucleotide sequence ID" value="NC_009767.1"/>
</dbReference>
<dbReference type="SMR" id="A7NFR6"/>
<dbReference type="STRING" id="383372.Rcas_0160"/>
<dbReference type="KEGG" id="rca:Rcas_0160"/>
<dbReference type="eggNOG" id="COG0192">
    <property type="taxonomic scope" value="Bacteria"/>
</dbReference>
<dbReference type="HOGENOM" id="CLU_041802_1_1_0"/>
<dbReference type="OrthoDB" id="9801686at2"/>
<dbReference type="UniPathway" id="UPA00315">
    <property type="reaction ID" value="UER00080"/>
</dbReference>
<dbReference type="Proteomes" id="UP000000263">
    <property type="component" value="Chromosome"/>
</dbReference>
<dbReference type="GO" id="GO:0005737">
    <property type="term" value="C:cytoplasm"/>
    <property type="evidence" value="ECO:0007669"/>
    <property type="project" value="UniProtKB-SubCell"/>
</dbReference>
<dbReference type="GO" id="GO:0005524">
    <property type="term" value="F:ATP binding"/>
    <property type="evidence" value="ECO:0007669"/>
    <property type="project" value="UniProtKB-UniRule"/>
</dbReference>
<dbReference type="GO" id="GO:0000287">
    <property type="term" value="F:magnesium ion binding"/>
    <property type="evidence" value="ECO:0007669"/>
    <property type="project" value="UniProtKB-UniRule"/>
</dbReference>
<dbReference type="GO" id="GO:0004478">
    <property type="term" value="F:methionine adenosyltransferase activity"/>
    <property type="evidence" value="ECO:0007669"/>
    <property type="project" value="UniProtKB-UniRule"/>
</dbReference>
<dbReference type="GO" id="GO:0006730">
    <property type="term" value="P:one-carbon metabolic process"/>
    <property type="evidence" value="ECO:0007669"/>
    <property type="project" value="UniProtKB-KW"/>
</dbReference>
<dbReference type="GO" id="GO:0006556">
    <property type="term" value="P:S-adenosylmethionine biosynthetic process"/>
    <property type="evidence" value="ECO:0007669"/>
    <property type="project" value="UniProtKB-UniRule"/>
</dbReference>
<dbReference type="CDD" id="cd18079">
    <property type="entry name" value="S-AdoMet_synt"/>
    <property type="match status" value="1"/>
</dbReference>
<dbReference type="FunFam" id="3.30.300.10:FF:000003">
    <property type="entry name" value="S-adenosylmethionine synthase"/>
    <property type="match status" value="1"/>
</dbReference>
<dbReference type="FunFam" id="3.30.300.10:FF:000004">
    <property type="entry name" value="S-adenosylmethionine synthase"/>
    <property type="match status" value="1"/>
</dbReference>
<dbReference type="Gene3D" id="3.30.300.10">
    <property type="match status" value="3"/>
</dbReference>
<dbReference type="HAMAP" id="MF_00086">
    <property type="entry name" value="S_AdoMet_synth1"/>
    <property type="match status" value="1"/>
</dbReference>
<dbReference type="InterPro" id="IPR022631">
    <property type="entry name" value="ADOMET_SYNTHASE_CS"/>
</dbReference>
<dbReference type="InterPro" id="IPR022630">
    <property type="entry name" value="S-AdoMet_synt_C"/>
</dbReference>
<dbReference type="InterPro" id="IPR022629">
    <property type="entry name" value="S-AdoMet_synt_central"/>
</dbReference>
<dbReference type="InterPro" id="IPR022628">
    <property type="entry name" value="S-AdoMet_synt_N"/>
</dbReference>
<dbReference type="InterPro" id="IPR002133">
    <property type="entry name" value="S-AdoMet_synthetase"/>
</dbReference>
<dbReference type="InterPro" id="IPR022636">
    <property type="entry name" value="S-AdoMet_synthetase_sfam"/>
</dbReference>
<dbReference type="NCBIfam" id="TIGR01034">
    <property type="entry name" value="metK"/>
    <property type="match status" value="1"/>
</dbReference>
<dbReference type="PANTHER" id="PTHR11964">
    <property type="entry name" value="S-ADENOSYLMETHIONINE SYNTHETASE"/>
    <property type="match status" value="1"/>
</dbReference>
<dbReference type="Pfam" id="PF02773">
    <property type="entry name" value="S-AdoMet_synt_C"/>
    <property type="match status" value="1"/>
</dbReference>
<dbReference type="Pfam" id="PF02772">
    <property type="entry name" value="S-AdoMet_synt_M"/>
    <property type="match status" value="1"/>
</dbReference>
<dbReference type="Pfam" id="PF00438">
    <property type="entry name" value="S-AdoMet_synt_N"/>
    <property type="match status" value="1"/>
</dbReference>
<dbReference type="PIRSF" id="PIRSF000497">
    <property type="entry name" value="MAT"/>
    <property type="match status" value="1"/>
</dbReference>
<dbReference type="SUPFAM" id="SSF55973">
    <property type="entry name" value="S-adenosylmethionine synthetase"/>
    <property type="match status" value="3"/>
</dbReference>
<dbReference type="PROSITE" id="PS00376">
    <property type="entry name" value="ADOMET_SYNTHASE_1"/>
    <property type="match status" value="1"/>
</dbReference>
<dbReference type="PROSITE" id="PS00377">
    <property type="entry name" value="ADOMET_SYNTHASE_2"/>
    <property type="match status" value="1"/>
</dbReference>
<feature type="chain" id="PRO_1000075388" description="S-adenosylmethionine synthase">
    <location>
        <begin position="1"/>
        <end position="405"/>
    </location>
</feature>
<feature type="region of interest" description="Flexible loop" evidence="1">
    <location>
        <begin position="107"/>
        <end position="117"/>
    </location>
</feature>
<feature type="binding site" description="in other chain" evidence="1">
    <location>
        <position position="22"/>
    </location>
    <ligand>
        <name>ATP</name>
        <dbReference type="ChEBI" id="CHEBI:30616"/>
        <note>ligand shared between two neighboring subunits</note>
    </ligand>
</feature>
<feature type="binding site" evidence="1">
    <location>
        <position position="24"/>
    </location>
    <ligand>
        <name>Mg(2+)</name>
        <dbReference type="ChEBI" id="CHEBI:18420"/>
    </ligand>
</feature>
<feature type="binding site" evidence="1">
    <location>
        <position position="50"/>
    </location>
    <ligand>
        <name>K(+)</name>
        <dbReference type="ChEBI" id="CHEBI:29103"/>
    </ligand>
</feature>
<feature type="binding site" description="in other chain" evidence="1">
    <location>
        <position position="63"/>
    </location>
    <ligand>
        <name>L-methionine</name>
        <dbReference type="ChEBI" id="CHEBI:57844"/>
        <note>ligand shared between two neighboring subunits</note>
    </ligand>
</feature>
<feature type="binding site" description="in other chain" evidence="1">
    <location>
        <position position="107"/>
    </location>
    <ligand>
        <name>L-methionine</name>
        <dbReference type="ChEBI" id="CHEBI:57844"/>
        <note>ligand shared between two neighboring subunits</note>
    </ligand>
</feature>
<feature type="binding site" description="in other chain" evidence="1">
    <location>
        <begin position="184"/>
        <end position="186"/>
    </location>
    <ligand>
        <name>ATP</name>
        <dbReference type="ChEBI" id="CHEBI:30616"/>
        <note>ligand shared between two neighboring subunits</note>
    </ligand>
</feature>
<feature type="binding site" description="in other chain" evidence="1">
    <location>
        <begin position="250"/>
        <end position="251"/>
    </location>
    <ligand>
        <name>ATP</name>
        <dbReference type="ChEBI" id="CHEBI:30616"/>
        <note>ligand shared between two neighboring subunits</note>
    </ligand>
</feature>
<feature type="binding site" evidence="1">
    <location>
        <position position="259"/>
    </location>
    <ligand>
        <name>ATP</name>
        <dbReference type="ChEBI" id="CHEBI:30616"/>
        <note>ligand shared between two neighboring subunits</note>
    </ligand>
</feature>
<feature type="binding site" evidence="1">
    <location>
        <position position="259"/>
    </location>
    <ligand>
        <name>L-methionine</name>
        <dbReference type="ChEBI" id="CHEBI:57844"/>
        <note>ligand shared between two neighboring subunits</note>
    </ligand>
</feature>
<feature type="binding site" description="in other chain" evidence="1">
    <location>
        <begin position="265"/>
        <end position="266"/>
    </location>
    <ligand>
        <name>ATP</name>
        <dbReference type="ChEBI" id="CHEBI:30616"/>
        <note>ligand shared between two neighboring subunits</note>
    </ligand>
</feature>
<feature type="binding site" evidence="1">
    <location>
        <position position="282"/>
    </location>
    <ligand>
        <name>ATP</name>
        <dbReference type="ChEBI" id="CHEBI:30616"/>
        <note>ligand shared between two neighboring subunits</note>
    </ligand>
</feature>
<feature type="binding site" evidence="1">
    <location>
        <position position="286"/>
    </location>
    <ligand>
        <name>ATP</name>
        <dbReference type="ChEBI" id="CHEBI:30616"/>
        <note>ligand shared between two neighboring subunits</note>
    </ligand>
</feature>
<feature type="binding site" description="in other chain" evidence="1">
    <location>
        <position position="290"/>
    </location>
    <ligand>
        <name>L-methionine</name>
        <dbReference type="ChEBI" id="CHEBI:57844"/>
        <note>ligand shared between two neighboring subunits</note>
    </ligand>
</feature>
<sequence length="405" mass="44492">MSTSFMKSPRLFFTSESVTEGHPDKICDQVSDAVLDAFLSHDPRARVACETATTTGLIVVIGEVTYEQGYIPIEEIVRKTIKDIGYTDAAYGFDADTCGVMVAIHGQSPDIAQGVNRALEVRSDGQVTEEEVATIGAGDQGMMFGFACNETPELMPLPIALAHRIGRRLSRLRKDGVLPYLRPDGKSQVTIEYSYGRPVRVDTVLVSNQHAPDVTQEQIRHDIIHHVIHEVIPNDLLDEKTKYFVNPTGRFVIGGPMGDSGLTGRKIIVDTYGGMARHGGGAFSGKDPTKVDRSAAYACRWVAKNVVAAGLADRFEIQVSYAIGVARPLSISVECFGTNKVPEETIVRLIDEHFDLRPGAIIRDLRLRRPIYRPTAAYGHFGRDDIDAPWEQTDRAEALRRAAGL</sequence>
<name>METK_ROSCS</name>